<name>HIS1_VESOH</name>
<sequence length="205" mass="22647">MLTITLSKGRILKQTLPLLEQAGLIIAKQELNSRKLILDTNLTDVKVIIVRSTDVPVFVQHGATDMGIAGKDVLLEHGANNLFEVLDLGIAKCKLMVAAESKNRLKQNTLKVATKYVNSTKRYFQNKGQSCEIIKLYGAMELAPKVGLAHCIVDLVDTGNTLKANGLIPFEYIEKISSRLVVNVASFRTKNAQIKSWIQNIENSL</sequence>
<evidence type="ECO:0000255" key="1">
    <source>
        <dbReference type="HAMAP-Rule" id="MF_01018"/>
    </source>
</evidence>
<dbReference type="EC" id="2.4.2.17" evidence="1"/>
<dbReference type="EMBL" id="AP009247">
    <property type="protein sequence ID" value="BAF61672.1"/>
    <property type="molecule type" value="Genomic_DNA"/>
</dbReference>
<dbReference type="RefSeq" id="WP_011929942.1">
    <property type="nucleotide sequence ID" value="NC_009465.1"/>
</dbReference>
<dbReference type="SMR" id="A5CWJ0"/>
<dbReference type="STRING" id="412965.COSY_0555"/>
<dbReference type="KEGG" id="vok:COSY_0555"/>
<dbReference type="eggNOG" id="COG0040">
    <property type="taxonomic scope" value="Bacteria"/>
</dbReference>
<dbReference type="HOGENOM" id="CLU_038115_2_0_6"/>
<dbReference type="OrthoDB" id="9801867at2"/>
<dbReference type="UniPathway" id="UPA00031">
    <property type="reaction ID" value="UER00006"/>
</dbReference>
<dbReference type="Proteomes" id="UP000000247">
    <property type="component" value="Chromosome"/>
</dbReference>
<dbReference type="GO" id="GO:0005737">
    <property type="term" value="C:cytoplasm"/>
    <property type="evidence" value="ECO:0007669"/>
    <property type="project" value="UniProtKB-SubCell"/>
</dbReference>
<dbReference type="GO" id="GO:0005524">
    <property type="term" value="F:ATP binding"/>
    <property type="evidence" value="ECO:0007669"/>
    <property type="project" value="UniProtKB-KW"/>
</dbReference>
<dbReference type="GO" id="GO:0003879">
    <property type="term" value="F:ATP phosphoribosyltransferase activity"/>
    <property type="evidence" value="ECO:0007669"/>
    <property type="project" value="UniProtKB-UniRule"/>
</dbReference>
<dbReference type="GO" id="GO:0000105">
    <property type="term" value="P:L-histidine biosynthetic process"/>
    <property type="evidence" value="ECO:0007669"/>
    <property type="project" value="UniProtKB-UniRule"/>
</dbReference>
<dbReference type="CDD" id="cd13595">
    <property type="entry name" value="PBP2_HisGs"/>
    <property type="match status" value="1"/>
</dbReference>
<dbReference type="FunFam" id="3.40.190.10:FF:000011">
    <property type="entry name" value="ATP phosphoribosyltransferase"/>
    <property type="match status" value="1"/>
</dbReference>
<dbReference type="Gene3D" id="3.40.190.10">
    <property type="entry name" value="Periplasmic binding protein-like II"/>
    <property type="match status" value="2"/>
</dbReference>
<dbReference type="HAMAP" id="MF_01018">
    <property type="entry name" value="HisG_Short"/>
    <property type="match status" value="1"/>
</dbReference>
<dbReference type="InterPro" id="IPR013820">
    <property type="entry name" value="ATP_PRibTrfase_cat"/>
</dbReference>
<dbReference type="InterPro" id="IPR018198">
    <property type="entry name" value="ATP_PRibTrfase_CS"/>
</dbReference>
<dbReference type="InterPro" id="IPR001348">
    <property type="entry name" value="ATP_PRibTrfase_HisG"/>
</dbReference>
<dbReference type="InterPro" id="IPR024893">
    <property type="entry name" value="ATP_PRibTrfase_HisG_short"/>
</dbReference>
<dbReference type="NCBIfam" id="TIGR00070">
    <property type="entry name" value="hisG"/>
    <property type="match status" value="1"/>
</dbReference>
<dbReference type="PANTHER" id="PTHR21403:SF8">
    <property type="entry name" value="ATP PHOSPHORIBOSYLTRANSFERASE"/>
    <property type="match status" value="1"/>
</dbReference>
<dbReference type="PANTHER" id="PTHR21403">
    <property type="entry name" value="ATP PHOSPHORIBOSYLTRANSFERASE ATP-PRTASE"/>
    <property type="match status" value="1"/>
</dbReference>
<dbReference type="Pfam" id="PF01634">
    <property type="entry name" value="HisG"/>
    <property type="match status" value="1"/>
</dbReference>
<dbReference type="SUPFAM" id="SSF53850">
    <property type="entry name" value="Periplasmic binding protein-like II"/>
    <property type="match status" value="1"/>
</dbReference>
<dbReference type="PROSITE" id="PS01316">
    <property type="entry name" value="ATP_P_PHORIBOSYLTR"/>
    <property type="match status" value="1"/>
</dbReference>
<reference key="1">
    <citation type="journal article" date="2007" name="Curr. Biol.">
        <title>Reduced genome of the thioautotrophic intracellular symbiont in a deep-sea clam, Calyptogena okutanii.</title>
        <authorList>
            <person name="Kuwahara H."/>
            <person name="Yoshida T."/>
            <person name="Takaki Y."/>
            <person name="Shimamura S."/>
            <person name="Nishi S."/>
            <person name="Harada M."/>
            <person name="Matsuyama K."/>
            <person name="Takishita K."/>
            <person name="Kawato M."/>
            <person name="Uematsu K."/>
            <person name="Fujiwara Y."/>
            <person name="Sato T."/>
            <person name="Kato C."/>
            <person name="Kitagawa M."/>
            <person name="Kato I."/>
            <person name="Maruyama T."/>
        </authorList>
    </citation>
    <scope>NUCLEOTIDE SEQUENCE [LARGE SCALE GENOMIC DNA]</scope>
    <source>
        <strain>HA</strain>
    </source>
</reference>
<comment type="function">
    <text evidence="1">Catalyzes the condensation of ATP and 5-phosphoribose 1-diphosphate to form N'-(5'-phosphoribosyl)-ATP (PR-ATP). Has a crucial role in the pathway because the rate of histidine biosynthesis seems to be controlled primarily by regulation of HisG enzymatic activity.</text>
</comment>
<comment type="catalytic activity">
    <reaction evidence="1">
        <text>1-(5-phospho-beta-D-ribosyl)-ATP + diphosphate = 5-phospho-alpha-D-ribose 1-diphosphate + ATP</text>
        <dbReference type="Rhea" id="RHEA:18473"/>
        <dbReference type="ChEBI" id="CHEBI:30616"/>
        <dbReference type="ChEBI" id="CHEBI:33019"/>
        <dbReference type="ChEBI" id="CHEBI:58017"/>
        <dbReference type="ChEBI" id="CHEBI:73183"/>
        <dbReference type="EC" id="2.4.2.17"/>
    </reaction>
</comment>
<comment type="pathway">
    <text evidence="1">Amino-acid biosynthesis; L-histidine biosynthesis; L-histidine from 5-phospho-alpha-D-ribose 1-diphosphate: step 1/9.</text>
</comment>
<comment type="subunit">
    <text evidence="1">Heteromultimer composed of HisG and HisZ subunits.</text>
</comment>
<comment type="subcellular location">
    <subcellularLocation>
        <location evidence="1">Cytoplasm</location>
    </subcellularLocation>
</comment>
<comment type="domain">
    <text>Lacks the C-terminal regulatory region which is replaced by HisZ.</text>
</comment>
<comment type="similarity">
    <text evidence="1">Belongs to the ATP phosphoribosyltransferase family. Short subfamily.</text>
</comment>
<keyword id="KW-0028">Amino-acid biosynthesis</keyword>
<keyword id="KW-0067">ATP-binding</keyword>
<keyword id="KW-0963">Cytoplasm</keyword>
<keyword id="KW-0328">Glycosyltransferase</keyword>
<keyword id="KW-0368">Histidine biosynthesis</keyword>
<keyword id="KW-0547">Nucleotide-binding</keyword>
<keyword id="KW-1185">Reference proteome</keyword>
<keyword id="KW-0808">Transferase</keyword>
<accession>A5CWJ0</accession>
<proteinExistence type="inferred from homology"/>
<organism>
    <name type="scientific">Vesicomyosocius okutanii subsp. Calyptogena okutanii (strain HA)</name>
    <dbReference type="NCBI Taxonomy" id="412965"/>
    <lineage>
        <taxon>Bacteria</taxon>
        <taxon>Pseudomonadati</taxon>
        <taxon>Pseudomonadota</taxon>
        <taxon>Gammaproteobacteria</taxon>
        <taxon>Candidatus Pseudothioglobaceae</taxon>
        <taxon>Candidatus Vesicomyosocius</taxon>
    </lineage>
</organism>
<gene>
    <name evidence="1" type="primary">hisG</name>
    <name type="ordered locus">COSY_0555</name>
</gene>
<protein>
    <recommendedName>
        <fullName evidence="1">ATP phosphoribosyltransferase</fullName>
        <shortName evidence="1">ATP-PRT</shortName>
        <shortName evidence="1">ATP-PRTase</shortName>
        <ecNumber evidence="1">2.4.2.17</ecNumber>
    </recommendedName>
</protein>
<feature type="chain" id="PRO_0000319537" description="ATP phosphoribosyltransferase">
    <location>
        <begin position="1"/>
        <end position="205"/>
    </location>
</feature>